<comment type="function">
    <text evidence="1">Forms part of the ribosomal stalk which helps the ribosome interact with GTP-bound translation factors.</text>
</comment>
<comment type="subunit">
    <text evidence="1">Part of the ribosomal stalk of the 50S ribosomal subunit. Interacts with L10 and the large rRNA to form the base of the stalk. L10 forms an elongated spine to which L12 dimers bind in a sequential fashion forming a multimeric L10(L12)X complex.</text>
</comment>
<comment type="PTM">
    <text evidence="1">One or more lysine residues are methylated.</text>
</comment>
<comment type="similarity">
    <text evidence="1">Belongs to the universal ribosomal protein uL11 family.</text>
</comment>
<keyword id="KW-0488">Methylation</keyword>
<keyword id="KW-0687">Ribonucleoprotein</keyword>
<keyword id="KW-0689">Ribosomal protein</keyword>
<keyword id="KW-0694">RNA-binding</keyword>
<keyword id="KW-0699">rRNA-binding</keyword>
<feature type="initiator methionine" description="Removed">
    <location>
        <position position="1"/>
    </location>
</feature>
<feature type="chain" id="PRO_0000104357" description="Large ribosomal subunit protein uL11">
    <location>
        <begin position="2"/>
        <end position="142"/>
    </location>
</feature>
<gene>
    <name evidence="1" type="primary">rplK</name>
</gene>
<dbReference type="EMBL" id="X12584">
    <property type="protein sequence ID" value="CAA31095.1"/>
    <property type="molecule type" value="Genomic_DNA"/>
</dbReference>
<dbReference type="PIR" id="S01967">
    <property type="entry name" value="R5SE11"/>
</dbReference>
<dbReference type="RefSeq" id="WP_004929911.1">
    <property type="nucleotide sequence ID" value="NZ_WNKC01000011.1"/>
</dbReference>
<dbReference type="SMR" id="P09763"/>
<dbReference type="STRING" id="273526.SMDB11_4373"/>
<dbReference type="GeneID" id="97766104"/>
<dbReference type="OrthoDB" id="9802408at2"/>
<dbReference type="GO" id="GO:0022625">
    <property type="term" value="C:cytosolic large ribosomal subunit"/>
    <property type="evidence" value="ECO:0007669"/>
    <property type="project" value="TreeGrafter"/>
</dbReference>
<dbReference type="GO" id="GO:0070180">
    <property type="term" value="F:large ribosomal subunit rRNA binding"/>
    <property type="evidence" value="ECO:0007669"/>
    <property type="project" value="UniProtKB-UniRule"/>
</dbReference>
<dbReference type="GO" id="GO:0003735">
    <property type="term" value="F:structural constituent of ribosome"/>
    <property type="evidence" value="ECO:0007669"/>
    <property type="project" value="InterPro"/>
</dbReference>
<dbReference type="GO" id="GO:0006412">
    <property type="term" value="P:translation"/>
    <property type="evidence" value="ECO:0007669"/>
    <property type="project" value="UniProtKB-UniRule"/>
</dbReference>
<dbReference type="CDD" id="cd00349">
    <property type="entry name" value="Ribosomal_L11"/>
    <property type="match status" value="1"/>
</dbReference>
<dbReference type="FunFam" id="1.10.10.250:FF:000001">
    <property type="entry name" value="50S ribosomal protein L11"/>
    <property type="match status" value="1"/>
</dbReference>
<dbReference type="FunFam" id="3.30.1550.10:FF:000001">
    <property type="entry name" value="50S ribosomal protein L11"/>
    <property type="match status" value="1"/>
</dbReference>
<dbReference type="Gene3D" id="1.10.10.250">
    <property type="entry name" value="Ribosomal protein L11, C-terminal domain"/>
    <property type="match status" value="1"/>
</dbReference>
<dbReference type="Gene3D" id="3.30.1550.10">
    <property type="entry name" value="Ribosomal protein L11/L12, N-terminal domain"/>
    <property type="match status" value="1"/>
</dbReference>
<dbReference type="HAMAP" id="MF_00736">
    <property type="entry name" value="Ribosomal_uL11"/>
    <property type="match status" value="1"/>
</dbReference>
<dbReference type="InterPro" id="IPR000911">
    <property type="entry name" value="Ribosomal_uL11"/>
</dbReference>
<dbReference type="InterPro" id="IPR006519">
    <property type="entry name" value="Ribosomal_uL11_bac-typ"/>
</dbReference>
<dbReference type="InterPro" id="IPR020783">
    <property type="entry name" value="Ribosomal_uL11_C"/>
</dbReference>
<dbReference type="InterPro" id="IPR036769">
    <property type="entry name" value="Ribosomal_uL11_C_sf"/>
</dbReference>
<dbReference type="InterPro" id="IPR020785">
    <property type="entry name" value="Ribosomal_uL11_CS"/>
</dbReference>
<dbReference type="InterPro" id="IPR020784">
    <property type="entry name" value="Ribosomal_uL11_N"/>
</dbReference>
<dbReference type="InterPro" id="IPR036796">
    <property type="entry name" value="Ribosomal_uL11_N_sf"/>
</dbReference>
<dbReference type="NCBIfam" id="TIGR01632">
    <property type="entry name" value="L11_bact"/>
    <property type="match status" value="1"/>
</dbReference>
<dbReference type="PANTHER" id="PTHR11661">
    <property type="entry name" value="60S RIBOSOMAL PROTEIN L12"/>
    <property type="match status" value="1"/>
</dbReference>
<dbReference type="PANTHER" id="PTHR11661:SF1">
    <property type="entry name" value="LARGE RIBOSOMAL SUBUNIT PROTEIN UL11M"/>
    <property type="match status" value="1"/>
</dbReference>
<dbReference type="Pfam" id="PF00298">
    <property type="entry name" value="Ribosomal_L11"/>
    <property type="match status" value="1"/>
</dbReference>
<dbReference type="Pfam" id="PF03946">
    <property type="entry name" value="Ribosomal_L11_N"/>
    <property type="match status" value="1"/>
</dbReference>
<dbReference type="SMART" id="SM00649">
    <property type="entry name" value="RL11"/>
    <property type="match status" value="1"/>
</dbReference>
<dbReference type="SUPFAM" id="SSF54747">
    <property type="entry name" value="Ribosomal L11/L12e N-terminal domain"/>
    <property type="match status" value="1"/>
</dbReference>
<dbReference type="SUPFAM" id="SSF46906">
    <property type="entry name" value="Ribosomal protein L11, C-terminal domain"/>
    <property type="match status" value="1"/>
</dbReference>
<dbReference type="PROSITE" id="PS00359">
    <property type="entry name" value="RIBOSOMAL_L11"/>
    <property type="match status" value="1"/>
</dbReference>
<accession>P09763</accession>
<sequence length="142" mass="14908">MAKKVQAYVKLQVAAGMANPSPPVGPALGQQGVNIMEFCKAFNAKTDSIEKGLPIPVVITVYSDRSFTFVTKTPPAAVLLKKAAGIKSGSGKPNKDKVGKVTRAQVREIAETKAADMTGSDVEAMTRSIEGTARSMGLVVED</sequence>
<name>RL11_SERMA</name>
<proteinExistence type="inferred from homology"/>
<organism>
    <name type="scientific">Serratia marcescens</name>
    <dbReference type="NCBI Taxonomy" id="615"/>
    <lineage>
        <taxon>Bacteria</taxon>
        <taxon>Pseudomonadati</taxon>
        <taxon>Pseudomonadota</taxon>
        <taxon>Gammaproteobacteria</taxon>
        <taxon>Enterobacterales</taxon>
        <taxon>Yersiniaceae</taxon>
        <taxon>Serratia</taxon>
    </lineage>
</organism>
<evidence type="ECO:0000255" key="1">
    <source>
        <dbReference type="HAMAP-Rule" id="MF_00736"/>
    </source>
</evidence>
<evidence type="ECO:0000305" key="2"/>
<protein>
    <recommendedName>
        <fullName evidence="1">Large ribosomal subunit protein uL11</fullName>
    </recommendedName>
    <alternativeName>
        <fullName evidence="2">50S ribosomal protein L11</fullName>
    </alternativeName>
</protein>
<reference key="1">
    <citation type="journal article" date="1987" name="Mol. Gen. Genet.">
        <title>Cloning and DNA sequence determination of the L11 ribosomal protein operon of Serratia marcescens and Proteus vulgaris: translational feedback regulation of the Escherichia coli L11 operon by heterologous L1 proteins.</title>
        <authorList>
            <person name="Sor F."/>
            <person name="Nomura M."/>
        </authorList>
    </citation>
    <scope>NUCLEOTIDE SEQUENCE [GENOMIC DNA]</scope>
    <source>
        <strain>NO1011</strain>
    </source>
</reference>